<accession>Q2GCI5</accession>
<gene>
    <name evidence="1" type="primary">tsf</name>
    <name type="ordered locus">NSE_0947</name>
</gene>
<feature type="chain" id="PRO_0000241498" description="Elongation factor Ts">
    <location>
        <begin position="1"/>
        <end position="290"/>
    </location>
</feature>
<feature type="region of interest" description="Involved in Mg(2+) ion dislocation from EF-Tu" evidence="1">
    <location>
        <begin position="80"/>
        <end position="83"/>
    </location>
</feature>
<sequence length="290" mass="31558">MSKINLEDLKSLSKETSAGLVHCKQALSEAHGDLTRAREILKELGHAVSVKKANRGARDGVVGALSSGKFGVILELNCETDFVARNEKFQQFAQSVLEAACAAKVKSVEECLSTPLPGGQKVRDAIVEQVAVFRENIVLSRCVTYEVSQSGLLGVYVHNKYTENLGKIGVAVAVVSEADPSFLSTVAKDIAIQVMSECPCAIDVARIPPNLLESEKHKYNLEVEGKPASVAEKIIAGKLSKFYKKVVLLEQPLFSDPERSVKQYISDKEMESSAKIDVVWYEVFVLGEAS</sequence>
<organism>
    <name type="scientific">Neorickettsia sennetsu (strain ATCC VR-367 / Miyayama)</name>
    <name type="common">Ehrlichia sennetsu</name>
    <dbReference type="NCBI Taxonomy" id="222891"/>
    <lineage>
        <taxon>Bacteria</taxon>
        <taxon>Pseudomonadati</taxon>
        <taxon>Pseudomonadota</taxon>
        <taxon>Alphaproteobacteria</taxon>
        <taxon>Rickettsiales</taxon>
        <taxon>Anaplasmataceae</taxon>
        <taxon>Neorickettsia</taxon>
    </lineage>
</organism>
<evidence type="ECO:0000255" key="1">
    <source>
        <dbReference type="HAMAP-Rule" id="MF_00050"/>
    </source>
</evidence>
<name>EFTS_NEOSM</name>
<protein>
    <recommendedName>
        <fullName evidence="1">Elongation factor Ts</fullName>
        <shortName evidence="1">EF-Ts</shortName>
    </recommendedName>
</protein>
<reference key="1">
    <citation type="journal article" date="2006" name="PLoS Genet.">
        <title>Comparative genomics of emerging human ehrlichiosis agents.</title>
        <authorList>
            <person name="Dunning Hotopp J.C."/>
            <person name="Lin M."/>
            <person name="Madupu R."/>
            <person name="Crabtree J."/>
            <person name="Angiuoli S.V."/>
            <person name="Eisen J.A."/>
            <person name="Seshadri R."/>
            <person name="Ren Q."/>
            <person name="Wu M."/>
            <person name="Utterback T.R."/>
            <person name="Smith S."/>
            <person name="Lewis M."/>
            <person name="Khouri H."/>
            <person name="Zhang C."/>
            <person name="Niu H."/>
            <person name="Lin Q."/>
            <person name="Ohashi N."/>
            <person name="Zhi N."/>
            <person name="Nelson W.C."/>
            <person name="Brinkac L.M."/>
            <person name="Dodson R.J."/>
            <person name="Rosovitz M.J."/>
            <person name="Sundaram J.P."/>
            <person name="Daugherty S.C."/>
            <person name="Davidsen T."/>
            <person name="Durkin A.S."/>
            <person name="Gwinn M.L."/>
            <person name="Haft D.H."/>
            <person name="Selengut J.D."/>
            <person name="Sullivan S.A."/>
            <person name="Zafar N."/>
            <person name="Zhou L."/>
            <person name="Benahmed F."/>
            <person name="Forberger H."/>
            <person name="Halpin R."/>
            <person name="Mulligan S."/>
            <person name="Robinson J."/>
            <person name="White O."/>
            <person name="Rikihisa Y."/>
            <person name="Tettelin H."/>
        </authorList>
    </citation>
    <scope>NUCLEOTIDE SEQUENCE [LARGE SCALE GENOMIC DNA]</scope>
    <source>
        <strain>ATCC VR-367 / Miyayama</strain>
    </source>
</reference>
<proteinExistence type="inferred from homology"/>
<keyword id="KW-0963">Cytoplasm</keyword>
<keyword id="KW-0251">Elongation factor</keyword>
<keyword id="KW-0648">Protein biosynthesis</keyword>
<comment type="function">
    <text evidence="1">Associates with the EF-Tu.GDP complex and induces the exchange of GDP to GTP. It remains bound to the aminoacyl-tRNA.EF-Tu.GTP complex up to the GTP hydrolysis stage on the ribosome.</text>
</comment>
<comment type="subcellular location">
    <subcellularLocation>
        <location evidence="1">Cytoplasm</location>
    </subcellularLocation>
</comment>
<comment type="similarity">
    <text evidence="1">Belongs to the EF-Ts family.</text>
</comment>
<dbReference type="EMBL" id="CP000237">
    <property type="protein sequence ID" value="ABD46009.1"/>
    <property type="molecule type" value="Genomic_DNA"/>
</dbReference>
<dbReference type="RefSeq" id="WP_011452317.1">
    <property type="nucleotide sequence ID" value="NC_007798.1"/>
</dbReference>
<dbReference type="SMR" id="Q2GCI5"/>
<dbReference type="STRING" id="222891.NSE_0947"/>
<dbReference type="KEGG" id="nse:NSE_0947"/>
<dbReference type="eggNOG" id="COG0264">
    <property type="taxonomic scope" value="Bacteria"/>
</dbReference>
<dbReference type="HOGENOM" id="CLU_047155_0_2_5"/>
<dbReference type="OrthoDB" id="9808348at2"/>
<dbReference type="Proteomes" id="UP000001942">
    <property type="component" value="Chromosome"/>
</dbReference>
<dbReference type="GO" id="GO:0005737">
    <property type="term" value="C:cytoplasm"/>
    <property type="evidence" value="ECO:0007669"/>
    <property type="project" value="UniProtKB-SubCell"/>
</dbReference>
<dbReference type="GO" id="GO:0003746">
    <property type="term" value="F:translation elongation factor activity"/>
    <property type="evidence" value="ECO:0007669"/>
    <property type="project" value="UniProtKB-UniRule"/>
</dbReference>
<dbReference type="Gene3D" id="1.10.286.20">
    <property type="match status" value="1"/>
</dbReference>
<dbReference type="Gene3D" id="1.10.8.10">
    <property type="entry name" value="DNA helicase RuvA subunit, C-terminal domain"/>
    <property type="match status" value="1"/>
</dbReference>
<dbReference type="Gene3D" id="3.30.479.20">
    <property type="entry name" value="Elongation factor Ts, dimerisation domain"/>
    <property type="match status" value="2"/>
</dbReference>
<dbReference type="HAMAP" id="MF_00050">
    <property type="entry name" value="EF_Ts"/>
    <property type="match status" value="1"/>
</dbReference>
<dbReference type="InterPro" id="IPR036402">
    <property type="entry name" value="EF-Ts_dimer_sf"/>
</dbReference>
<dbReference type="InterPro" id="IPR001816">
    <property type="entry name" value="Transl_elong_EFTs/EF1B"/>
</dbReference>
<dbReference type="InterPro" id="IPR014039">
    <property type="entry name" value="Transl_elong_EFTs/EF1B_dimer"/>
</dbReference>
<dbReference type="InterPro" id="IPR018101">
    <property type="entry name" value="Transl_elong_Ts_CS"/>
</dbReference>
<dbReference type="InterPro" id="IPR009060">
    <property type="entry name" value="UBA-like_sf"/>
</dbReference>
<dbReference type="NCBIfam" id="TIGR00116">
    <property type="entry name" value="tsf"/>
    <property type="match status" value="1"/>
</dbReference>
<dbReference type="PANTHER" id="PTHR11741">
    <property type="entry name" value="ELONGATION FACTOR TS"/>
    <property type="match status" value="1"/>
</dbReference>
<dbReference type="PANTHER" id="PTHR11741:SF0">
    <property type="entry name" value="ELONGATION FACTOR TS, MITOCHONDRIAL"/>
    <property type="match status" value="1"/>
</dbReference>
<dbReference type="Pfam" id="PF00889">
    <property type="entry name" value="EF_TS"/>
    <property type="match status" value="1"/>
</dbReference>
<dbReference type="SUPFAM" id="SSF54713">
    <property type="entry name" value="Elongation factor Ts (EF-Ts), dimerisation domain"/>
    <property type="match status" value="1"/>
</dbReference>
<dbReference type="SUPFAM" id="SSF46934">
    <property type="entry name" value="UBA-like"/>
    <property type="match status" value="1"/>
</dbReference>
<dbReference type="PROSITE" id="PS01127">
    <property type="entry name" value="EF_TS_2"/>
    <property type="match status" value="1"/>
</dbReference>